<gene>
    <name evidence="1" type="primary">pyrR</name>
    <name type="ordered locus">Deide_18100</name>
</gene>
<proteinExistence type="inferred from homology"/>
<protein>
    <recommendedName>
        <fullName evidence="1">Bifunctional protein PyrR</fullName>
    </recommendedName>
    <domain>
        <recommendedName>
            <fullName evidence="1">Pyrimidine operon regulatory protein</fullName>
        </recommendedName>
    </domain>
    <domain>
        <recommendedName>
            <fullName evidence="1">Uracil phosphoribosyltransferase</fullName>
            <shortName evidence="1">UPRTase</shortName>
            <ecNumber evidence="1">2.4.2.9</ecNumber>
        </recommendedName>
    </domain>
</protein>
<keyword id="KW-0328">Glycosyltransferase</keyword>
<keyword id="KW-1185">Reference proteome</keyword>
<keyword id="KW-0804">Transcription</keyword>
<keyword id="KW-0805">Transcription regulation</keyword>
<keyword id="KW-0808">Transferase</keyword>
<sequence length="183" mass="20223">MSAPKATILTADEVRRAMTRIAHEIIERNKGAENLALIGIHTRGIPLAERLAAKLSELEGVDIPTGMLDITLYRDDLSEVAHQPIIRETQVPFDLGQRRVILVDDVLYTGRTVRAALDALIDLGRPVGIQLAVLVDRGHRELPIRADYVGKNLPTASSEVVKVKLHETDGVDSVELWDLEDLK</sequence>
<evidence type="ECO:0000255" key="1">
    <source>
        <dbReference type="HAMAP-Rule" id="MF_01219"/>
    </source>
</evidence>
<dbReference type="EC" id="2.4.2.9" evidence="1"/>
<dbReference type="EMBL" id="CP001114">
    <property type="protein sequence ID" value="ACO46797.1"/>
    <property type="molecule type" value="Genomic_DNA"/>
</dbReference>
<dbReference type="RefSeq" id="WP_012693919.1">
    <property type="nucleotide sequence ID" value="NC_012526.1"/>
</dbReference>
<dbReference type="SMR" id="C1CX80"/>
<dbReference type="STRING" id="546414.Deide_18100"/>
<dbReference type="PaxDb" id="546414-Deide_18100"/>
<dbReference type="KEGG" id="ddr:Deide_18100"/>
<dbReference type="eggNOG" id="COG2065">
    <property type="taxonomic scope" value="Bacteria"/>
</dbReference>
<dbReference type="HOGENOM" id="CLU_094234_2_1_0"/>
<dbReference type="OrthoDB" id="9802227at2"/>
<dbReference type="Proteomes" id="UP000002208">
    <property type="component" value="Chromosome"/>
</dbReference>
<dbReference type="GO" id="GO:0004845">
    <property type="term" value="F:uracil phosphoribosyltransferase activity"/>
    <property type="evidence" value="ECO:0007669"/>
    <property type="project" value="UniProtKB-UniRule"/>
</dbReference>
<dbReference type="GO" id="GO:0006355">
    <property type="term" value="P:regulation of DNA-templated transcription"/>
    <property type="evidence" value="ECO:0007669"/>
    <property type="project" value="UniProtKB-UniRule"/>
</dbReference>
<dbReference type="CDD" id="cd06223">
    <property type="entry name" value="PRTases_typeI"/>
    <property type="match status" value="1"/>
</dbReference>
<dbReference type="FunFam" id="3.40.50.2020:FF:000020">
    <property type="entry name" value="Bifunctional protein PyrR"/>
    <property type="match status" value="1"/>
</dbReference>
<dbReference type="Gene3D" id="3.40.50.2020">
    <property type="match status" value="1"/>
</dbReference>
<dbReference type="HAMAP" id="MF_01219">
    <property type="entry name" value="PyrR"/>
    <property type="match status" value="1"/>
</dbReference>
<dbReference type="InterPro" id="IPR000836">
    <property type="entry name" value="PRibTrfase_dom"/>
</dbReference>
<dbReference type="InterPro" id="IPR029057">
    <property type="entry name" value="PRTase-like"/>
</dbReference>
<dbReference type="InterPro" id="IPR023050">
    <property type="entry name" value="PyrR"/>
</dbReference>
<dbReference type="InterPro" id="IPR050137">
    <property type="entry name" value="PyrR_bifunctional"/>
</dbReference>
<dbReference type="NCBIfam" id="NF003545">
    <property type="entry name" value="PRK05205.1-1"/>
    <property type="match status" value="1"/>
</dbReference>
<dbReference type="NCBIfam" id="NF003547">
    <property type="entry name" value="PRK05205.1-3"/>
    <property type="match status" value="1"/>
</dbReference>
<dbReference type="NCBIfam" id="NF003548">
    <property type="entry name" value="PRK05205.1-4"/>
    <property type="match status" value="1"/>
</dbReference>
<dbReference type="NCBIfam" id="NF003549">
    <property type="entry name" value="PRK05205.1-5"/>
    <property type="match status" value="1"/>
</dbReference>
<dbReference type="PANTHER" id="PTHR11608">
    <property type="entry name" value="BIFUNCTIONAL PROTEIN PYRR"/>
    <property type="match status" value="1"/>
</dbReference>
<dbReference type="PANTHER" id="PTHR11608:SF0">
    <property type="entry name" value="BIFUNCTIONAL PROTEIN PYRR"/>
    <property type="match status" value="1"/>
</dbReference>
<dbReference type="Pfam" id="PF00156">
    <property type="entry name" value="Pribosyltran"/>
    <property type="match status" value="1"/>
</dbReference>
<dbReference type="SUPFAM" id="SSF53271">
    <property type="entry name" value="PRTase-like"/>
    <property type="match status" value="1"/>
</dbReference>
<comment type="function">
    <text evidence="1">Regulates the transcription of the pyrimidine nucleotide (pyr) operon in response to exogenous pyrimidines.</text>
</comment>
<comment type="function">
    <text evidence="1">Also displays a weak uracil phosphoribosyltransferase activity which is not physiologically significant.</text>
</comment>
<comment type="catalytic activity">
    <reaction evidence="1">
        <text>UMP + diphosphate = 5-phospho-alpha-D-ribose 1-diphosphate + uracil</text>
        <dbReference type="Rhea" id="RHEA:13017"/>
        <dbReference type="ChEBI" id="CHEBI:17568"/>
        <dbReference type="ChEBI" id="CHEBI:33019"/>
        <dbReference type="ChEBI" id="CHEBI:57865"/>
        <dbReference type="ChEBI" id="CHEBI:58017"/>
        <dbReference type="EC" id="2.4.2.9"/>
    </reaction>
</comment>
<comment type="similarity">
    <text evidence="1">Belongs to the purine/pyrimidine phosphoribosyltransferase family. PyrR subfamily.</text>
</comment>
<feature type="chain" id="PRO_1000213949" description="Bifunctional protein PyrR">
    <location>
        <begin position="1"/>
        <end position="183"/>
    </location>
</feature>
<feature type="short sequence motif" description="PRPP-binding" evidence="1">
    <location>
        <begin position="100"/>
        <end position="112"/>
    </location>
</feature>
<organism>
    <name type="scientific">Deinococcus deserti (strain DSM 17065 / CIP 109153 / LMG 22923 / VCD115)</name>
    <dbReference type="NCBI Taxonomy" id="546414"/>
    <lineage>
        <taxon>Bacteria</taxon>
        <taxon>Thermotogati</taxon>
        <taxon>Deinococcota</taxon>
        <taxon>Deinococci</taxon>
        <taxon>Deinococcales</taxon>
        <taxon>Deinococcaceae</taxon>
        <taxon>Deinococcus</taxon>
    </lineage>
</organism>
<accession>C1CX80</accession>
<name>PYRR_DEIDV</name>
<reference key="1">
    <citation type="journal article" date="2009" name="PLoS Genet.">
        <title>Alliance of proteomics and genomics to unravel the specificities of Sahara bacterium Deinococcus deserti.</title>
        <authorList>
            <person name="de Groot A."/>
            <person name="Dulermo R."/>
            <person name="Ortet P."/>
            <person name="Blanchard L."/>
            <person name="Guerin P."/>
            <person name="Fernandez B."/>
            <person name="Vacherie B."/>
            <person name="Dossat C."/>
            <person name="Jolivet E."/>
            <person name="Siguier P."/>
            <person name="Chandler M."/>
            <person name="Barakat M."/>
            <person name="Dedieu A."/>
            <person name="Barbe V."/>
            <person name="Heulin T."/>
            <person name="Sommer S."/>
            <person name="Achouak W."/>
            <person name="Armengaud J."/>
        </authorList>
    </citation>
    <scope>NUCLEOTIDE SEQUENCE [LARGE SCALE GENOMIC DNA]</scope>
    <source>
        <strain>DSM 17065 / CIP 109153 / LMG 22923 / VCD115</strain>
    </source>
</reference>